<dbReference type="EMBL" id="AAFI02000031">
    <property type="protein sequence ID" value="EAL67707.1"/>
    <property type="molecule type" value="Genomic_DNA"/>
</dbReference>
<dbReference type="RefSeq" id="XP_641687.1">
    <property type="nucleotide sequence ID" value="XM_636595.1"/>
</dbReference>
<dbReference type="SMR" id="Q54WN0"/>
<dbReference type="FunCoup" id="Q54WN0">
    <property type="interactions" value="488"/>
</dbReference>
<dbReference type="STRING" id="44689.Q54WN0"/>
<dbReference type="PaxDb" id="44689-DDB0234240"/>
<dbReference type="EnsemblProtists" id="EAL67707">
    <property type="protein sequence ID" value="EAL67707"/>
    <property type="gene ID" value="DDB_G0279537"/>
</dbReference>
<dbReference type="GeneID" id="8622095"/>
<dbReference type="KEGG" id="ddi:DDB_G0279537"/>
<dbReference type="dictyBase" id="DDB_G0279537">
    <property type="gene designation" value="ap3d1"/>
</dbReference>
<dbReference type="VEuPathDB" id="AmoebaDB:DDB_G0279537"/>
<dbReference type="eggNOG" id="KOG1059">
    <property type="taxonomic scope" value="Eukaryota"/>
</dbReference>
<dbReference type="HOGENOM" id="CLU_001908_0_0_1"/>
<dbReference type="InParanoid" id="Q54WN0"/>
<dbReference type="OMA" id="GIRNHKK"/>
<dbReference type="PhylomeDB" id="Q54WN0"/>
<dbReference type="PRO" id="PR:Q54WN0"/>
<dbReference type="Proteomes" id="UP000002195">
    <property type="component" value="Chromosome 3"/>
</dbReference>
<dbReference type="GO" id="GO:0030123">
    <property type="term" value="C:AP-3 adaptor complex"/>
    <property type="evidence" value="ECO:0000314"/>
    <property type="project" value="dictyBase"/>
</dbReference>
<dbReference type="GO" id="GO:0010008">
    <property type="term" value="C:endosome membrane"/>
    <property type="evidence" value="ECO:0000318"/>
    <property type="project" value="GO_Central"/>
</dbReference>
<dbReference type="GO" id="GO:0006896">
    <property type="term" value="P:Golgi to vacuole transport"/>
    <property type="evidence" value="ECO:0000318"/>
    <property type="project" value="GO_Central"/>
</dbReference>
<dbReference type="GO" id="GO:0006623">
    <property type="term" value="P:protein targeting to vacuole"/>
    <property type="evidence" value="ECO:0000318"/>
    <property type="project" value="GO_Central"/>
</dbReference>
<dbReference type="FunFam" id="1.25.10.10:FF:000251">
    <property type="entry name" value="AP-3 complex subunit delta"/>
    <property type="match status" value="1"/>
</dbReference>
<dbReference type="Gene3D" id="1.25.10.10">
    <property type="entry name" value="Leucine-rich Repeat Variant"/>
    <property type="match status" value="1"/>
</dbReference>
<dbReference type="InterPro" id="IPR017105">
    <property type="entry name" value="AP3_complex_dsu"/>
</dbReference>
<dbReference type="InterPro" id="IPR010474">
    <property type="entry name" value="AP3D_dom_metazoa"/>
</dbReference>
<dbReference type="InterPro" id="IPR011989">
    <property type="entry name" value="ARM-like"/>
</dbReference>
<dbReference type="InterPro" id="IPR016024">
    <property type="entry name" value="ARM-type_fold"/>
</dbReference>
<dbReference type="InterPro" id="IPR002553">
    <property type="entry name" value="Clathrin/coatomer_adapt-like_N"/>
</dbReference>
<dbReference type="InterPro" id="IPR008152">
    <property type="entry name" value="Clathrin_a/b/g-adaptin_app_Ig"/>
</dbReference>
<dbReference type="PANTHER" id="PTHR22781:SF12">
    <property type="entry name" value="AP-3 COMPLEX SUBUNIT DELTA-1"/>
    <property type="match status" value="1"/>
</dbReference>
<dbReference type="PANTHER" id="PTHR22781">
    <property type="entry name" value="DELTA ADAPTIN-RELATED"/>
    <property type="match status" value="1"/>
</dbReference>
<dbReference type="Pfam" id="PF01602">
    <property type="entry name" value="Adaptin_N"/>
    <property type="match status" value="1"/>
</dbReference>
<dbReference type="Pfam" id="PF02883">
    <property type="entry name" value="Alpha_adaptinC2"/>
    <property type="match status" value="1"/>
</dbReference>
<dbReference type="SMART" id="SM00809">
    <property type="entry name" value="Alpha_adaptinC2"/>
    <property type="match status" value="1"/>
</dbReference>
<dbReference type="SMART" id="SM01354">
    <property type="entry name" value="BLVR"/>
    <property type="match status" value="1"/>
</dbReference>
<dbReference type="SUPFAM" id="SSF48371">
    <property type="entry name" value="ARM repeat"/>
    <property type="match status" value="1"/>
</dbReference>
<organism>
    <name type="scientific">Dictyostelium discoideum</name>
    <name type="common">Social amoeba</name>
    <dbReference type="NCBI Taxonomy" id="44689"/>
    <lineage>
        <taxon>Eukaryota</taxon>
        <taxon>Amoebozoa</taxon>
        <taxon>Evosea</taxon>
        <taxon>Eumycetozoa</taxon>
        <taxon>Dictyostelia</taxon>
        <taxon>Dictyosteliales</taxon>
        <taxon>Dictyosteliaceae</taxon>
        <taxon>Dictyostelium</taxon>
    </lineage>
</organism>
<evidence type="ECO:0000250" key="1"/>
<evidence type="ECO:0000255" key="2"/>
<evidence type="ECO:0000256" key="3">
    <source>
        <dbReference type="SAM" id="MobiDB-lite"/>
    </source>
</evidence>
<evidence type="ECO:0000305" key="4"/>
<protein>
    <recommendedName>
        <fullName>AP-3 complex subunit delta</fullName>
    </recommendedName>
    <alternativeName>
        <fullName>Adaptor-related protein complex 3 subunit delta</fullName>
    </alternativeName>
    <alternativeName>
        <fullName>Delta-adaptin</fullName>
    </alternativeName>
</protein>
<comment type="function">
    <text>Part of the AP-3 complex, an adaptor-related complex which is essential for the compartmentalization of the endocytic pathway.</text>
</comment>
<comment type="subunit">
    <text evidence="1">Adaptor protein complex 3 (AP-3) is a heterotetramer composed of two large adaptins (delta-type subunit and beta-type subunit), a medium adaptin (mu-type subunit) and a small adaptin (sigma-type subunit).</text>
</comment>
<comment type="subcellular location">
    <subcellularLocation>
        <location evidence="1">Endosome membrane</location>
    </subcellularLocation>
</comment>
<comment type="similarity">
    <text evidence="4">Belongs to the adaptor complexes large subunit family.</text>
</comment>
<accession>Q54WN0</accession>
<name>AP3D_DICDI</name>
<reference key="1">
    <citation type="journal article" date="2005" name="Nature">
        <title>The genome of the social amoeba Dictyostelium discoideum.</title>
        <authorList>
            <person name="Eichinger L."/>
            <person name="Pachebat J.A."/>
            <person name="Gloeckner G."/>
            <person name="Rajandream M.A."/>
            <person name="Sucgang R."/>
            <person name="Berriman M."/>
            <person name="Song J."/>
            <person name="Olsen R."/>
            <person name="Szafranski K."/>
            <person name="Xu Q."/>
            <person name="Tunggal B."/>
            <person name="Kummerfeld S."/>
            <person name="Madera M."/>
            <person name="Konfortov B.A."/>
            <person name="Rivero F."/>
            <person name="Bankier A.T."/>
            <person name="Lehmann R."/>
            <person name="Hamlin N."/>
            <person name="Davies R."/>
            <person name="Gaudet P."/>
            <person name="Fey P."/>
            <person name="Pilcher K."/>
            <person name="Chen G."/>
            <person name="Saunders D."/>
            <person name="Sodergren E.J."/>
            <person name="Davis P."/>
            <person name="Kerhornou A."/>
            <person name="Nie X."/>
            <person name="Hall N."/>
            <person name="Anjard C."/>
            <person name="Hemphill L."/>
            <person name="Bason N."/>
            <person name="Farbrother P."/>
            <person name="Desany B."/>
            <person name="Just E."/>
            <person name="Morio T."/>
            <person name="Rost R."/>
            <person name="Churcher C.M."/>
            <person name="Cooper J."/>
            <person name="Haydock S."/>
            <person name="van Driessche N."/>
            <person name="Cronin A."/>
            <person name="Goodhead I."/>
            <person name="Muzny D.M."/>
            <person name="Mourier T."/>
            <person name="Pain A."/>
            <person name="Lu M."/>
            <person name="Harper D."/>
            <person name="Lindsay R."/>
            <person name="Hauser H."/>
            <person name="James K.D."/>
            <person name="Quiles M."/>
            <person name="Madan Babu M."/>
            <person name="Saito T."/>
            <person name="Buchrieser C."/>
            <person name="Wardroper A."/>
            <person name="Felder M."/>
            <person name="Thangavelu M."/>
            <person name="Johnson D."/>
            <person name="Knights A."/>
            <person name="Loulseged H."/>
            <person name="Mungall K.L."/>
            <person name="Oliver K."/>
            <person name="Price C."/>
            <person name="Quail M.A."/>
            <person name="Urushihara H."/>
            <person name="Hernandez J."/>
            <person name="Rabbinowitsch E."/>
            <person name="Steffen D."/>
            <person name="Sanders M."/>
            <person name="Ma J."/>
            <person name="Kohara Y."/>
            <person name="Sharp S."/>
            <person name="Simmonds M.N."/>
            <person name="Spiegler S."/>
            <person name="Tivey A."/>
            <person name="Sugano S."/>
            <person name="White B."/>
            <person name="Walker D."/>
            <person name="Woodward J.R."/>
            <person name="Winckler T."/>
            <person name="Tanaka Y."/>
            <person name="Shaulsky G."/>
            <person name="Schleicher M."/>
            <person name="Weinstock G.M."/>
            <person name="Rosenthal A."/>
            <person name="Cox E.C."/>
            <person name="Chisholm R.L."/>
            <person name="Gibbs R.A."/>
            <person name="Loomis W.F."/>
            <person name="Platzer M."/>
            <person name="Kay R.R."/>
            <person name="Williams J.G."/>
            <person name="Dear P.H."/>
            <person name="Noegel A.A."/>
            <person name="Barrell B.G."/>
            <person name="Kuspa A."/>
        </authorList>
    </citation>
    <scope>NUCLEOTIDE SEQUENCE [LARGE SCALE GENOMIC DNA]</scope>
    <source>
        <strain>AX4</strain>
    </source>
</reference>
<gene>
    <name type="primary">ap3d1</name>
    <name type="ORF">DDB_G0279537</name>
</gene>
<proteinExistence type="inferred from homology"/>
<keyword id="KW-0175">Coiled coil</keyword>
<keyword id="KW-0967">Endosome</keyword>
<keyword id="KW-0472">Membrane</keyword>
<keyword id="KW-0653">Protein transport</keyword>
<keyword id="KW-1185">Reference proteome</keyword>
<keyword id="KW-0677">Repeat</keyword>
<keyword id="KW-0813">Transport</keyword>
<feature type="chain" id="PRO_0000328025" description="AP-3 complex subunit delta">
    <location>
        <begin position="1"/>
        <end position="1143"/>
    </location>
</feature>
<feature type="repeat" description="HEAT 1">
    <location>
        <begin position="129"/>
        <end position="166"/>
    </location>
</feature>
<feature type="repeat" description="HEAT 2">
    <location>
        <begin position="167"/>
        <end position="203"/>
    </location>
</feature>
<feature type="repeat" description="HEAT 3">
    <location>
        <begin position="205"/>
        <end position="242"/>
    </location>
</feature>
<feature type="repeat" description="HEAT 4">
    <location>
        <begin position="245"/>
        <end position="279"/>
    </location>
</feature>
<feature type="repeat" description="HEAT 5">
    <location>
        <begin position="280"/>
        <end position="317"/>
    </location>
</feature>
<feature type="repeat" description="HEAT 6">
    <location>
        <begin position="318"/>
        <end position="354"/>
    </location>
</feature>
<feature type="repeat" description="HEAT 7">
    <location>
        <begin position="356"/>
        <end position="389"/>
    </location>
</feature>
<feature type="repeat" description="HEAT 8">
    <location>
        <begin position="416"/>
        <end position="455"/>
    </location>
</feature>
<feature type="domain" description="GAE">
    <location>
        <begin position="914"/>
        <end position="1016"/>
    </location>
</feature>
<feature type="region of interest" description="Disordered" evidence="3">
    <location>
        <begin position="520"/>
        <end position="541"/>
    </location>
</feature>
<feature type="region of interest" description="Disordered" evidence="3">
    <location>
        <begin position="634"/>
        <end position="692"/>
    </location>
</feature>
<feature type="region of interest" description="Disordered" evidence="3">
    <location>
        <begin position="704"/>
        <end position="728"/>
    </location>
</feature>
<feature type="region of interest" description="Disordered" evidence="3">
    <location>
        <begin position="741"/>
        <end position="792"/>
    </location>
</feature>
<feature type="region of interest" description="Disordered" evidence="3">
    <location>
        <begin position="829"/>
        <end position="899"/>
    </location>
</feature>
<feature type="coiled-coil region" evidence="2">
    <location>
        <begin position="526"/>
        <end position="550"/>
    </location>
</feature>
<feature type="coiled-coil region" evidence="2">
    <location>
        <begin position="814"/>
        <end position="835"/>
    </location>
</feature>
<feature type="compositionally biased region" description="Acidic residues" evidence="3">
    <location>
        <begin position="524"/>
        <end position="540"/>
    </location>
</feature>
<feature type="compositionally biased region" description="Basic residues" evidence="3">
    <location>
        <begin position="653"/>
        <end position="662"/>
    </location>
</feature>
<feature type="compositionally biased region" description="Acidic residues" evidence="3">
    <location>
        <begin position="666"/>
        <end position="675"/>
    </location>
</feature>
<feature type="compositionally biased region" description="Polar residues" evidence="3">
    <location>
        <begin position="840"/>
        <end position="849"/>
    </location>
</feature>
<feature type="compositionally biased region" description="Low complexity" evidence="3">
    <location>
        <begin position="854"/>
        <end position="867"/>
    </location>
</feature>
<feature type="compositionally biased region" description="Low complexity" evidence="3">
    <location>
        <begin position="881"/>
        <end position="899"/>
    </location>
</feature>
<sequence length="1143" mass="127858">MFERTLVDLIRGIRNHKKNETKFINQCINEIKEELKGDMQKKTVAVQKLTYIQMLGFDISWASFKIVEVMSCNKFSSKRIGYLAASQSFNEGTDVIVLATHQIRKDFLSSNQSEAYLALNCLSNICTTDLARELANDILTLLSTQKTHILKRAITVLYKIFLRYPESLRPAFPKLREKLDDPEPSVVSCSVNVICELARRNPKNYLPLAPVLFRILTNTTNNYWMLIKIVKLFAALTPHEPRLGKKLIDPLTNIINSSPSVSLLYECIQTCITGMSDHIPLMKLCISKLRTLIEHNDQNLKYLGLLALNNIMKIHPKAVSEHRDLVLNCLEDDDISIRLRALDLLPGMTSKKNIGDIVFKLLDHLDNAEGQYKEQIIEKIIELCSMGTYQFITDFEWYINILVKLSQIQDSIHGKLIASQLLDVVIRVKIVRAYSTRQMIELLKNPKLMSNPTEGGMCEVLYAAAWIVGEFSGYVNRPIDALEAFLQPRVCVLPSHIQSVYMLNSLKVFSHACAKANGDKIPSLDDDDEEEEAQEEEDQNEITHEIVQECLEIIKSRLTIFTHSIYLNVQERACLINELLSFYTVTKEQGNNISKELISLFTEQLNPVGPKAQKKVPIPEGLDLDEWINDPKHQEPIEEDEDDDIFNTSTSSHQKKHHKHHRGGYDGDDDEDDETNSSHSGHSSSNFNRHPIDIQRQKEERLRKQANNPYMLGGKVSKKLSTNDPENIPVVQLTGDLGHLHVGASSNRPMPSKGSKKTKKHYTIDTTTEMPEGAKESDDEDEKDNKYKNDALSNINLSEPLTASDVLHTSRHRTDIIKEKEREMAMLAKKNAKLSPKSPPSTANYSEVTSPEIAPAKKATKKAAAGSNPPPPPTAKKSSKKPAATSSTTTTTKSTQAAAAVVAPPPVIVKKVLKTILDDDNFKITCEILKVSPSNETDNNQIKLTMKVQNKTDEDMSDVSISLKNPAEQCVSIKNSGEIGVLEADASTTHTELLNVVNVLNSQELQFTLLASPSSSPSITNQLSIDLPFSFFIVATKLPKDKFAEILQKSGQVSAMDSTKITGQSLTMPLVIEKLAQQLSIEVVQAHPNGQTASFYAKTTQNHHIAMLVKEKDGNISFDIKSPQSLLNQILVKEIAQLTFSSK</sequence>